<evidence type="ECO:0000255" key="1">
    <source>
        <dbReference type="HAMAP-Rule" id="MF_00198"/>
    </source>
</evidence>
<protein>
    <recommendedName>
        <fullName evidence="1">Polyamine aminopropyltransferase</fullName>
    </recommendedName>
    <alternativeName>
        <fullName evidence="1">Putrescine aminopropyltransferase</fullName>
        <shortName evidence="1">PAPT</shortName>
    </alternativeName>
    <alternativeName>
        <fullName evidence="1">Spermidine synthase</fullName>
        <shortName evidence="1">SPDS</shortName>
        <shortName evidence="1">SPDSY</shortName>
        <ecNumber evidence="1">2.5.1.16</ecNumber>
    </alternativeName>
</protein>
<sequence>MAEKKQWHETLHDQFGQYFAVDNVLYHEKTDHQDLIIFENAAFGRVMALDGVVQTTERDEFIYHEMMTHVPLLAHGHAKHVLIIGGGDGAMLREVTRHKNVESITMVEIDAGVVSFCRQYLPNHNAGSYDDPRFKLVIDDGVNFVNQTSQTFDVIISDCTDPIGPGESLFTSAFYEGCKRCLNPGGIFVAQNGVCFLQQEEAIDSHRKLSHYFSDVGFYQAAIPTYYGGIMTFAWATDNDALRHLSTEIIQARFLASGLKCRYYNPAIHTAAFALPQYLQDALASQPS</sequence>
<organism>
    <name type="scientific">Escherichia coli (strain SE11)</name>
    <dbReference type="NCBI Taxonomy" id="409438"/>
    <lineage>
        <taxon>Bacteria</taxon>
        <taxon>Pseudomonadati</taxon>
        <taxon>Pseudomonadota</taxon>
        <taxon>Gammaproteobacteria</taxon>
        <taxon>Enterobacterales</taxon>
        <taxon>Enterobacteriaceae</taxon>
        <taxon>Escherichia</taxon>
    </lineage>
</organism>
<feature type="chain" id="PRO_1000099282" description="Polyamine aminopropyltransferase">
    <location>
        <begin position="1"/>
        <end position="288"/>
    </location>
</feature>
<feature type="domain" description="PABS" evidence="1">
    <location>
        <begin position="9"/>
        <end position="238"/>
    </location>
</feature>
<feature type="active site" description="Proton acceptor" evidence="1">
    <location>
        <position position="158"/>
    </location>
</feature>
<feature type="binding site" evidence="1">
    <location>
        <position position="33"/>
    </location>
    <ligand>
        <name>S-methyl-5'-thioadenosine</name>
        <dbReference type="ChEBI" id="CHEBI:17509"/>
    </ligand>
</feature>
<feature type="binding site" evidence="1">
    <location>
        <position position="64"/>
    </location>
    <ligand>
        <name>spermidine</name>
        <dbReference type="ChEBI" id="CHEBI:57834"/>
    </ligand>
</feature>
<feature type="binding site" evidence="1">
    <location>
        <position position="88"/>
    </location>
    <ligand>
        <name>spermidine</name>
        <dbReference type="ChEBI" id="CHEBI:57834"/>
    </ligand>
</feature>
<feature type="binding site" evidence="1">
    <location>
        <position position="108"/>
    </location>
    <ligand>
        <name>S-methyl-5'-thioadenosine</name>
        <dbReference type="ChEBI" id="CHEBI:17509"/>
    </ligand>
</feature>
<feature type="binding site" evidence="1">
    <location>
        <begin position="140"/>
        <end position="141"/>
    </location>
    <ligand>
        <name>S-methyl-5'-thioadenosine</name>
        <dbReference type="ChEBI" id="CHEBI:17509"/>
    </ligand>
</feature>
<feature type="binding site" evidence="1">
    <location>
        <begin position="158"/>
        <end position="161"/>
    </location>
    <ligand>
        <name>spermidine</name>
        <dbReference type="ChEBI" id="CHEBI:57834"/>
    </ligand>
</feature>
<feature type="binding site" evidence="1">
    <location>
        <position position="165"/>
    </location>
    <ligand>
        <name>S-methyl-5'-thioadenosine</name>
        <dbReference type="ChEBI" id="CHEBI:17509"/>
    </ligand>
</feature>
<reference key="1">
    <citation type="journal article" date="2008" name="DNA Res.">
        <title>Complete genome sequence and comparative analysis of the wild-type commensal Escherichia coli strain SE11 isolated from a healthy adult.</title>
        <authorList>
            <person name="Oshima K."/>
            <person name="Toh H."/>
            <person name="Ogura Y."/>
            <person name="Sasamoto H."/>
            <person name="Morita H."/>
            <person name="Park S.-H."/>
            <person name="Ooka T."/>
            <person name="Iyoda S."/>
            <person name="Taylor T.D."/>
            <person name="Hayashi T."/>
            <person name="Itoh K."/>
            <person name="Hattori M."/>
        </authorList>
    </citation>
    <scope>NUCLEOTIDE SEQUENCE [LARGE SCALE GENOMIC DNA]</scope>
    <source>
        <strain>SE11</strain>
    </source>
</reference>
<keyword id="KW-0963">Cytoplasm</keyword>
<keyword id="KW-0620">Polyamine biosynthesis</keyword>
<keyword id="KW-0745">Spermidine biosynthesis</keyword>
<keyword id="KW-0808">Transferase</keyword>
<name>SPEE_ECOSE</name>
<comment type="function">
    <text evidence="1">Catalyzes the irreversible transfer of a propylamine group from the amino donor S-adenosylmethioninamine (decarboxy-AdoMet) to putrescine (1,4-diaminobutane) to yield spermidine.</text>
</comment>
<comment type="catalytic activity">
    <reaction evidence="1">
        <text>S-adenosyl 3-(methylsulfanyl)propylamine + putrescine = S-methyl-5'-thioadenosine + spermidine + H(+)</text>
        <dbReference type="Rhea" id="RHEA:12721"/>
        <dbReference type="ChEBI" id="CHEBI:15378"/>
        <dbReference type="ChEBI" id="CHEBI:17509"/>
        <dbReference type="ChEBI" id="CHEBI:57443"/>
        <dbReference type="ChEBI" id="CHEBI:57834"/>
        <dbReference type="ChEBI" id="CHEBI:326268"/>
        <dbReference type="EC" id="2.5.1.16"/>
    </reaction>
</comment>
<comment type="pathway">
    <text evidence="1">Amine and polyamine biosynthesis; spermidine biosynthesis; spermidine from putrescine: step 1/1.</text>
</comment>
<comment type="subunit">
    <text evidence="1">Homodimer or homotetramer.</text>
</comment>
<comment type="subcellular location">
    <subcellularLocation>
        <location evidence="1">Cytoplasm</location>
    </subcellularLocation>
</comment>
<comment type="similarity">
    <text evidence="1">Belongs to the spermidine/spermine synthase family.</text>
</comment>
<accession>B6HZ96</accession>
<dbReference type="EC" id="2.5.1.16" evidence="1"/>
<dbReference type="EMBL" id="AP009240">
    <property type="protein sequence ID" value="BAG75645.1"/>
    <property type="molecule type" value="Genomic_DNA"/>
</dbReference>
<dbReference type="RefSeq" id="WP_000818411.1">
    <property type="nucleotide sequence ID" value="NC_011415.1"/>
</dbReference>
<dbReference type="SMR" id="B6HZ96"/>
<dbReference type="GeneID" id="75202064"/>
<dbReference type="KEGG" id="ecy:ECSE_0121"/>
<dbReference type="HOGENOM" id="CLU_048199_0_0_6"/>
<dbReference type="UniPathway" id="UPA00248">
    <property type="reaction ID" value="UER00314"/>
</dbReference>
<dbReference type="Proteomes" id="UP000008199">
    <property type="component" value="Chromosome"/>
</dbReference>
<dbReference type="GO" id="GO:0005829">
    <property type="term" value="C:cytosol"/>
    <property type="evidence" value="ECO:0007669"/>
    <property type="project" value="TreeGrafter"/>
</dbReference>
<dbReference type="GO" id="GO:0004766">
    <property type="term" value="F:spermidine synthase activity"/>
    <property type="evidence" value="ECO:0007669"/>
    <property type="project" value="UniProtKB-UniRule"/>
</dbReference>
<dbReference type="GO" id="GO:0008295">
    <property type="term" value="P:spermidine biosynthetic process"/>
    <property type="evidence" value="ECO:0007669"/>
    <property type="project" value="UniProtKB-UniRule"/>
</dbReference>
<dbReference type="CDD" id="cd02440">
    <property type="entry name" value="AdoMet_MTases"/>
    <property type="match status" value="1"/>
</dbReference>
<dbReference type="FunFam" id="2.30.140.10:FF:000002">
    <property type="entry name" value="Polyamine aminopropyltransferase"/>
    <property type="match status" value="1"/>
</dbReference>
<dbReference type="FunFam" id="3.40.50.150:FF:000026">
    <property type="entry name" value="Polyamine aminopropyltransferase"/>
    <property type="match status" value="1"/>
</dbReference>
<dbReference type="Gene3D" id="2.30.140.10">
    <property type="entry name" value="Spermidine synthase, tetramerisation domain"/>
    <property type="match status" value="1"/>
</dbReference>
<dbReference type="Gene3D" id="3.40.50.150">
    <property type="entry name" value="Vaccinia Virus protein VP39"/>
    <property type="match status" value="1"/>
</dbReference>
<dbReference type="HAMAP" id="MF_00198">
    <property type="entry name" value="Spermidine_synth"/>
    <property type="match status" value="1"/>
</dbReference>
<dbReference type="InterPro" id="IPR030374">
    <property type="entry name" value="PABS"/>
</dbReference>
<dbReference type="InterPro" id="IPR030373">
    <property type="entry name" value="PABS_CS"/>
</dbReference>
<dbReference type="InterPro" id="IPR029063">
    <property type="entry name" value="SAM-dependent_MTases_sf"/>
</dbReference>
<dbReference type="InterPro" id="IPR001045">
    <property type="entry name" value="Spermi_synthase"/>
</dbReference>
<dbReference type="InterPro" id="IPR035246">
    <property type="entry name" value="Spermidine_synt_N"/>
</dbReference>
<dbReference type="InterPro" id="IPR037163">
    <property type="entry name" value="Spermidine_synt_N_sf"/>
</dbReference>
<dbReference type="NCBIfam" id="NF037959">
    <property type="entry name" value="MFS_SpdSyn"/>
    <property type="match status" value="1"/>
</dbReference>
<dbReference type="NCBIfam" id="NF002010">
    <property type="entry name" value="PRK00811.1"/>
    <property type="match status" value="1"/>
</dbReference>
<dbReference type="NCBIfam" id="TIGR00417">
    <property type="entry name" value="speE"/>
    <property type="match status" value="1"/>
</dbReference>
<dbReference type="PANTHER" id="PTHR11558:SF11">
    <property type="entry name" value="SPERMIDINE SYNTHASE"/>
    <property type="match status" value="1"/>
</dbReference>
<dbReference type="PANTHER" id="PTHR11558">
    <property type="entry name" value="SPERMIDINE/SPERMINE SYNTHASE"/>
    <property type="match status" value="1"/>
</dbReference>
<dbReference type="Pfam" id="PF17284">
    <property type="entry name" value="Spermine_synt_N"/>
    <property type="match status" value="1"/>
</dbReference>
<dbReference type="Pfam" id="PF01564">
    <property type="entry name" value="Spermine_synth"/>
    <property type="match status" value="1"/>
</dbReference>
<dbReference type="SUPFAM" id="SSF53335">
    <property type="entry name" value="S-adenosyl-L-methionine-dependent methyltransferases"/>
    <property type="match status" value="1"/>
</dbReference>
<dbReference type="PROSITE" id="PS01330">
    <property type="entry name" value="PABS_1"/>
    <property type="match status" value="1"/>
</dbReference>
<dbReference type="PROSITE" id="PS51006">
    <property type="entry name" value="PABS_2"/>
    <property type="match status" value="1"/>
</dbReference>
<gene>
    <name evidence="1" type="primary">speE</name>
    <name type="ordered locus">ECSE_0121</name>
</gene>
<proteinExistence type="inferred from homology"/>